<proteinExistence type="evidence at protein level"/>
<reference key="1">
    <citation type="journal article" date="2000" name="Nature">
        <title>Sequence and analysis of chromosome 3 of the plant Arabidopsis thaliana.</title>
        <authorList>
            <person name="Salanoubat M."/>
            <person name="Lemcke K."/>
            <person name="Rieger M."/>
            <person name="Ansorge W."/>
            <person name="Unseld M."/>
            <person name="Fartmann B."/>
            <person name="Valle G."/>
            <person name="Bloecker H."/>
            <person name="Perez-Alonso M."/>
            <person name="Obermaier B."/>
            <person name="Delseny M."/>
            <person name="Boutry M."/>
            <person name="Grivell L.A."/>
            <person name="Mache R."/>
            <person name="Puigdomenech P."/>
            <person name="De Simone V."/>
            <person name="Choisne N."/>
            <person name="Artiguenave F."/>
            <person name="Robert C."/>
            <person name="Brottier P."/>
            <person name="Wincker P."/>
            <person name="Cattolico L."/>
            <person name="Weissenbach J."/>
            <person name="Saurin W."/>
            <person name="Quetier F."/>
            <person name="Schaefer M."/>
            <person name="Mueller-Auer S."/>
            <person name="Gabel C."/>
            <person name="Fuchs M."/>
            <person name="Benes V."/>
            <person name="Wurmbach E."/>
            <person name="Drzonek H."/>
            <person name="Erfle H."/>
            <person name="Jordan N."/>
            <person name="Bangert S."/>
            <person name="Wiedelmann R."/>
            <person name="Kranz H."/>
            <person name="Voss H."/>
            <person name="Holland R."/>
            <person name="Brandt P."/>
            <person name="Nyakatura G."/>
            <person name="Vezzi A."/>
            <person name="D'Angelo M."/>
            <person name="Pallavicini A."/>
            <person name="Toppo S."/>
            <person name="Simionati B."/>
            <person name="Conrad A."/>
            <person name="Hornischer K."/>
            <person name="Kauer G."/>
            <person name="Loehnert T.-H."/>
            <person name="Nordsiek G."/>
            <person name="Reichelt J."/>
            <person name="Scharfe M."/>
            <person name="Schoen O."/>
            <person name="Bargues M."/>
            <person name="Terol J."/>
            <person name="Climent J."/>
            <person name="Navarro P."/>
            <person name="Collado C."/>
            <person name="Perez-Perez A."/>
            <person name="Ottenwaelder B."/>
            <person name="Duchemin D."/>
            <person name="Cooke R."/>
            <person name="Laudie M."/>
            <person name="Berger-Llauro C."/>
            <person name="Purnelle B."/>
            <person name="Masuy D."/>
            <person name="de Haan M."/>
            <person name="Maarse A.C."/>
            <person name="Alcaraz J.-P."/>
            <person name="Cottet A."/>
            <person name="Casacuberta E."/>
            <person name="Monfort A."/>
            <person name="Argiriou A."/>
            <person name="Flores M."/>
            <person name="Liguori R."/>
            <person name="Vitale D."/>
            <person name="Mannhaupt G."/>
            <person name="Haase D."/>
            <person name="Schoof H."/>
            <person name="Rudd S."/>
            <person name="Zaccaria P."/>
            <person name="Mewes H.-W."/>
            <person name="Mayer K.F.X."/>
            <person name="Kaul S."/>
            <person name="Town C.D."/>
            <person name="Koo H.L."/>
            <person name="Tallon L.J."/>
            <person name="Jenkins J."/>
            <person name="Rooney T."/>
            <person name="Rizzo M."/>
            <person name="Walts A."/>
            <person name="Utterback T."/>
            <person name="Fujii C.Y."/>
            <person name="Shea T.P."/>
            <person name="Creasy T.H."/>
            <person name="Haas B."/>
            <person name="Maiti R."/>
            <person name="Wu D."/>
            <person name="Peterson J."/>
            <person name="Van Aken S."/>
            <person name="Pai G."/>
            <person name="Militscher J."/>
            <person name="Sellers P."/>
            <person name="Gill J.E."/>
            <person name="Feldblyum T.V."/>
            <person name="Preuss D."/>
            <person name="Lin X."/>
            <person name="Nierman W.C."/>
            <person name="Salzberg S.L."/>
            <person name="White O."/>
            <person name="Venter J.C."/>
            <person name="Fraser C.M."/>
            <person name="Kaneko T."/>
            <person name="Nakamura Y."/>
            <person name="Sato S."/>
            <person name="Kato T."/>
            <person name="Asamizu E."/>
            <person name="Sasamoto S."/>
            <person name="Kimura T."/>
            <person name="Idesawa K."/>
            <person name="Kawashima K."/>
            <person name="Kishida Y."/>
            <person name="Kiyokawa C."/>
            <person name="Kohara M."/>
            <person name="Matsumoto M."/>
            <person name="Matsuno A."/>
            <person name="Muraki A."/>
            <person name="Nakayama S."/>
            <person name="Nakazaki N."/>
            <person name="Shinpo S."/>
            <person name="Takeuchi C."/>
            <person name="Wada T."/>
            <person name="Watanabe A."/>
            <person name="Yamada M."/>
            <person name="Yasuda M."/>
            <person name="Tabata S."/>
        </authorList>
    </citation>
    <scope>NUCLEOTIDE SEQUENCE [LARGE SCALE GENOMIC DNA]</scope>
    <source>
        <strain>cv. Columbia</strain>
    </source>
</reference>
<reference key="2">
    <citation type="journal article" date="2017" name="Plant J.">
        <title>Araport11: a complete reannotation of the Arabidopsis thaliana reference genome.</title>
        <authorList>
            <person name="Cheng C.Y."/>
            <person name="Krishnakumar V."/>
            <person name="Chan A.P."/>
            <person name="Thibaud-Nissen F."/>
            <person name="Schobel S."/>
            <person name="Town C.D."/>
        </authorList>
    </citation>
    <scope>GENOME REANNOTATION</scope>
    <source>
        <strain>cv. Columbia</strain>
    </source>
</reference>
<reference key="3">
    <citation type="journal article" date="2003" name="Science">
        <title>Empirical analysis of transcriptional activity in the Arabidopsis genome.</title>
        <authorList>
            <person name="Yamada K."/>
            <person name="Lim J."/>
            <person name="Dale J.M."/>
            <person name="Chen H."/>
            <person name="Shinn P."/>
            <person name="Palm C.J."/>
            <person name="Southwick A.M."/>
            <person name="Wu H.C."/>
            <person name="Kim C.J."/>
            <person name="Nguyen M."/>
            <person name="Pham P.K."/>
            <person name="Cheuk R.F."/>
            <person name="Karlin-Newmann G."/>
            <person name="Liu S.X."/>
            <person name="Lam B."/>
            <person name="Sakano H."/>
            <person name="Wu T."/>
            <person name="Yu G."/>
            <person name="Miranda M."/>
            <person name="Quach H.L."/>
            <person name="Tripp M."/>
            <person name="Chang C.H."/>
            <person name="Lee J.M."/>
            <person name="Toriumi M.J."/>
            <person name="Chan M.M."/>
            <person name="Tang C.C."/>
            <person name="Onodera C.S."/>
            <person name="Deng J.M."/>
            <person name="Akiyama K."/>
            <person name="Ansari Y."/>
            <person name="Arakawa T."/>
            <person name="Banh J."/>
            <person name="Banno F."/>
            <person name="Bowser L."/>
            <person name="Brooks S.Y."/>
            <person name="Carninci P."/>
            <person name="Chao Q."/>
            <person name="Choy N."/>
            <person name="Enju A."/>
            <person name="Goldsmith A.D."/>
            <person name="Gurjal M."/>
            <person name="Hansen N.F."/>
            <person name="Hayashizaki Y."/>
            <person name="Johnson-Hopson C."/>
            <person name="Hsuan V.W."/>
            <person name="Iida K."/>
            <person name="Karnes M."/>
            <person name="Khan S."/>
            <person name="Koesema E."/>
            <person name="Ishida J."/>
            <person name="Jiang P.X."/>
            <person name="Jones T."/>
            <person name="Kawai J."/>
            <person name="Kamiya A."/>
            <person name="Meyers C."/>
            <person name="Nakajima M."/>
            <person name="Narusaka M."/>
            <person name="Seki M."/>
            <person name="Sakurai T."/>
            <person name="Satou M."/>
            <person name="Tamse R."/>
            <person name="Vaysberg M."/>
            <person name="Wallender E.K."/>
            <person name="Wong C."/>
            <person name="Yamamura Y."/>
            <person name="Yuan S."/>
            <person name="Shinozaki K."/>
            <person name="Davis R.W."/>
            <person name="Theologis A."/>
            <person name="Ecker J.R."/>
        </authorList>
    </citation>
    <scope>NUCLEOTIDE SEQUENCE [LARGE SCALE MRNA]</scope>
    <source>
        <strain>cv. Columbia</strain>
    </source>
</reference>
<reference key="4">
    <citation type="journal article" date="2002" name="Plant Physiol.">
        <title>Leaf senescence and starvation-induced chlorosis are accelerated by the disruption of an Arabidopsis autophagy gene.</title>
        <authorList>
            <person name="Hanaoka H."/>
            <person name="Noda T."/>
            <person name="Shirano Y."/>
            <person name="Kato T."/>
            <person name="Hayashi H."/>
            <person name="Shibata D."/>
            <person name="Tabata S."/>
            <person name="Ohsumi Y."/>
        </authorList>
    </citation>
    <scope>GENE FAMILY</scope>
    <scope>NOMENCLATURE</scope>
</reference>
<reference key="5">
    <citation type="journal article" date="2007" name="Autophagy">
        <title>ATG genes involved in non-selective autophagy are conserved from yeast to man, but the selective Cvt and pexophagy pathways also require organism-specific genes.</title>
        <authorList>
            <person name="Meijer W.H."/>
            <person name="van der Klei I.J."/>
            <person name="Veenhuis M."/>
            <person name="Kiel J.A.K.W."/>
        </authorList>
    </citation>
    <scope>GENE FAMILY</scope>
    <scope>NOMENCLATURE</scope>
</reference>
<reference key="6">
    <citation type="journal article" date="2011" name="Plant Cell">
        <title>The ATG1/ATG13 protein kinase complex is both a regulator and a target of autophagic recycling in Arabidopsis.</title>
        <authorList>
            <person name="Suttangkakul A."/>
            <person name="Li F."/>
            <person name="Chung T."/>
            <person name="Vierstra R.D."/>
        </authorList>
    </citation>
    <scope>FUNCTION</scope>
    <scope>INTERACTION WITH ATG13A</scope>
    <scope>SUBCELLULAR LOCATION</scope>
    <scope>PHOSPHORYLATION</scope>
    <scope>DISRUPTION PHENOTYPE</scope>
</reference>
<reference key="7">
    <citation type="journal article" date="2014" name="Plant Cell">
        <title>AUTOPHAGY-RELATED11 plays a critical role in general autophagy- and senescence-induced mitophagy in Arabidopsis.</title>
        <authorList>
            <person name="Li F."/>
            <person name="Chung T."/>
            <person name="Vierstra R.D."/>
        </authorList>
    </citation>
    <scope>INTERACTION WITH ATG8E</scope>
    <scope>SUBCELLULAR LOCATION</scope>
    <scope>AIM MOTIF</scope>
    <scope>MUTAGENESIS OF TYR-360 AND VAL-363</scope>
</reference>
<comment type="function">
    <text evidence="3">Serine/threonine protein kinase involved in autophagy in a nutritional condition-dependent manner. The ATG1-ATG13 protein kinase complex regulates downstream events required for autophagosome enclosure and/or vacuolar delivery. Becomes a target of autophagy under nutrient starvation. Connects autophagy to plant nutritional status.</text>
</comment>
<comment type="subunit">
    <text evidence="3 4">Interacts with ATG13A (PubMed:21984698). Interacts with ATG8E. Binds to ATG8E on autophagic vesicles (PubMed:24563201).</text>
</comment>
<comment type="subcellular location">
    <subcellularLocation>
        <location evidence="3 4">Cytoplasmic vesicle</location>
        <location evidence="3 4">Autophagosome</location>
    </subcellularLocation>
</comment>
<comment type="alternative products">
    <event type="alternative splicing"/>
    <isoform>
        <id>Q94C95-1</id>
        <name>1</name>
        <sequence type="displayed"/>
    </isoform>
    <text evidence="7">A number of isoforms are produced. According to EST sequences.</text>
</comment>
<comment type="PTM">
    <text evidence="3">Phosphorylated during nutrient starvation. Dephosphorylated in nutrient-rich conditions.</text>
</comment>
<comment type="disruption phenotype">
    <text evidence="3">No visible phenotype under normal growth conditions.</text>
</comment>
<comment type="similarity">
    <text evidence="1">Belongs to the protein kinase superfamily. Ser/Thr protein kinase family.</text>
</comment>
<comment type="sequence caution" evidence="7">
    <conflict type="erroneous gene model prediction">
        <sequence resource="EMBL-CDS" id="CAB71903"/>
    </conflict>
</comment>
<name>ATG1A_ARATH</name>
<feature type="chain" id="PRO_0000434619" description="Serine/threonine-protein kinase ATG1a">
    <location>
        <begin position="1"/>
        <end position="626"/>
    </location>
</feature>
<feature type="domain" description="Protein kinase" evidence="1">
    <location>
        <begin position="10"/>
        <end position="268"/>
    </location>
</feature>
<feature type="region of interest" description="Disordered" evidence="2">
    <location>
        <begin position="288"/>
        <end position="347"/>
    </location>
</feature>
<feature type="short sequence motif" description="AIM (Atg8-family-interacting motif)" evidence="4">
    <location>
        <begin position="360"/>
        <end position="363"/>
    </location>
</feature>
<feature type="compositionally biased region" description="Polar residues" evidence="2">
    <location>
        <begin position="288"/>
        <end position="308"/>
    </location>
</feature>
<feature type="compositionally biased region" description="Low complexity" evidence="2">
    <location>
        <begin position="315"/>
        <end position="325"/>
    </location>
</feature>
<feature type="compositionally biased region" description="Basic and acidic residues" evidence="2">
    <location>
        <begin position="330"/>
        <end position="339"/>
    </location>
</feature>
<feature type="active site" description="Proton acceptor" evidence="1">
    <location>
        <position position="132"/>
    </location>
</feature>
<feature type="binding site" evidence="1">
    <location>
        <begin position="16"/>
        <end position="24"/>
    </location>
    <ligand>
        <name>ATP</name>
        <dbReference type="ChEBI" id="CHEBI:30616"/>
    </ligand>
</feature>
<feature type="binding site" evidence="1">
    <location>
        <position position="39"/>
    </location>
    <ligand>
        <name>ATP</name>
        <dbReference type="ChEBI" id="CHEBI:30616"/>
    </ligand>
</feature>
<feature type="mutagenesis site" description="Loss of binding to ATG8E; when associated with A-363." evidence="4">
    <original>Y</original>
    <variation>A</variation>
    <location>
        <position position="360"/>
    </location>
</feature>
<feature type="mutagenesis site" description="Loss of binding to ATG8E; when associated with A-360." evidence="4">
    <original>V</original>
    <variation>A</variation>
    <location>
        <position position="363"/>
    </location>
</feature>
<dbReference type="EC" id="2.7.11.-"/>
<dbReference type="EMBL" id="AL138642">
    <property type="protein sequence ID" value="CAB71903.1"/>
    <property type="status" value="ALT_SEQ"/>
    <property type="molecule type" value="Genomic_DNA"/>
</dbReference>
<dbReference type="EMBL" id="CP002686">
    <property type="protein sequence ID" value="AEE80285.1"/>
    <property type="molecule type" value="Genomic_DNA"/>
</dbReference>
<dbReference type="EMBL" id="AY035049">
    <property type="protein sequence ID" value="AAK59554.1"/>
    <property type="molecule type" value="mRNA"/>
</dbReference>
<dbReference type="PIR" id="T47988">
    <property type="entry name" value="T47988"/>
</dbReference>
<dbReference type="RefSeq" id="NP_567122.1">
    <molecule id="Q94C95-1"/>
    <property type="nucleotide sequence ID" value="NM_116061.3"/>
</dbReference>
<dbReference type="SMR" id="Q94C95"/>
<dbReference type="FunCoup" id="Q94C95">
    <property type="interactions" value="1182"/>
</dbReference>
<dbReference type="STRING" id="3702.Q94C95"/>
<dbReference type="TCDB" id="9.A.15.3.1">
    <property type="family name" value="the autophagy-related phagophore-formation transporter (apt) family"/>
</dbReference>
<dbReference type="iPTMnet" id="Q94C95"/>
<dbReference type="PaxDb" id="3702-AT3G61960.1"/>
<dbReference type="ProteomicsDB" id="241040">
    <molecule id="Q94C95-1"/>
</dbReference>
<dbReference type="EnsemblPlants" id="AT3G61960.1">
    <molecule id="Q94C95-1"/>
    <property type="protein sequence ID" value="AT3G61960.1"/>
    <property type="gene ID" value="AT3G61960"/>
</dbReference>
<dbReference type="GeneID" id="825369"/>
<dbReference type="Gramene" id="AT3G61960.1">
    <molecule id="Q94C95-1"/>
    <property type="protein sequence ID" value="AT3G61960.1"/>
    <property type="gene ID" value="AT3G61960"/>
</dbReference>
<dbReference type="KEGG" id="ath:AT3G61960"/>
<dbReference type="Araport" id="AT3G61960"/>
<dbReference type="TAIR" id="AT3G61960">
    <property type="gene designation" value="ATG1A"/>
</dbReference>
<dbReference type="eggNOG" id="KOG0595">
    <property type="taxonomic scope" value="Eukaryota"/>
</dbReference>
<dbReference type="InParanoid" id="Q94C95"/>
<dbReference type="PhylomeDB" id="Q94C95"/>
<dbReference type="PRO" id="PR:Q94C95"/>
<dbReference type="Proteomes" id="UP000006548">
    <property type="component" value="Chromosome 3"/>
</dbReference>
<dbReference type="ExpressionAtlas" id="Q94C95">
    <property type="expression patterns" value="baseline and differential"/>
</dbReference>
<dbReference type="GO" id="GO:0005776">
    <property type="term" value="C:autophagosome"/>
    <property type="evidence" value="ECO:0000314"/>
    <property type="project" value="UniProtKB"/>
</dbReference>
<dbReference type="GO" id="GO:0031410">
    <property type="term" value="C:cytoplasmic vesicle"/>
    <property type="evidence" value="ECO:0007669"/>
    <property type="project" value="UniProtKB-KW"/>
</dbReference>
<dbReference type="GO" id="GO:0005524">
    <property type="term" value="F:ATP binding"/>
    <property type="evidence" value="ECO:0007669"/>
    <property type="project" value="UniProtKB-KW"/>
</dbReference>
<dbReference type="GO" id="GO:0004674">
    <property type="term" value="F:protein serine/threonine kinase activity"/>
    <property type="evidence" value="ECO:0007669"/>
    <property type="project" value="UniProtKB-KW"/>
</dbReference>
<dbReference type="GO" id="GO:0006914">
    <property type="term" value="P:autophagy"/>
    <property type="evidence" value="ECO:0000314"/>
    <property type="project" value="UniProtKB"/>
</dbReference>
<dbReference type="GO" id="GO:0015031">
    <property type="term" value="P:protein transport"/>
    <property type="evidence" value="ECO:0007669"/>
    <property type="project" value="UniProtKB-KW"/>
</dbReference>
<dbReference type="GO" id="GO:0010506">
    <property type="term" value="P:regulation of autophagy"/>
    <property type="evidence" value="ECO:0007669"/>
    <property type="project" value="InterPro"/>
</dbReference>
<dbReference type="CDD" id="cd14009">
    <property type="entry name" value="STKc_ATG1_ULK_like"/>
    <property type="match status" value="1"/>
</dbReference>
<dbReference type="FunFam" id="3.30.200.20:FF:000003">
    <property type="entry name" value="Non-specific serine/threonine protein kinase"/>
    <property type="match status" value="1"/>
</dbReference>
<dbReference type="FunFam" id="1.10.510.10:FF:000548">
    <property type="entry name" value="Serine/threonine-protein kinase ATG1"/>
    <property type="match status" value="1"/>
</dbReference>
<dbReference type="Gene3D" id="1.10.510.10">
    <property type="entry name" value="Transferase(Phosphotransferase) domain 1"/>
    <property type="match status" value="1"/>
</dbReference>
<dbReference type="InterPro" id="IPR045269">
    <property type="entry name" value="Atg1-like"/>
</dbReference>
<dbReference type="InterPro" id="IPR011009">
    <property type="entry name" value="Kinase-like_dom_sf"/>
</dbReference>
<dbReference type="InterPro" id="IPR056281">
    <property type="entry name" value="MIT_ATG1a/b/c"/>
</dbReference>
<dbReference type="InterPro" id="IPR000719">
    <property type="entry name" value="Prot_kinase_dom"/>
</dbReference>
<dbReference type="InterPro" id="IPR017441">
    <property type="entry name" value="Protein_kinase_ATP_BS"/>
</dbReference>
<dbReference type="InterPro" id="IPR008271">
    <property type="entry name" value="Ser/Thr_kinase_AS"/>
</dbReference>
<dbReference type="PANTHER" id="PTHR24348:SF22">
    <property type="entry name" value="NON-SPECIFIC SERINE_THREONINE PROTEIN KINASE"/>
    <property type="match status" value="1"/>
</dbReference>
<dbReference type="PANTHER" id="PTHR24348">
    <property type="entry name" value="SERINE/THREONINE-PROTEIN KINASE UNC-51-RELATED"/>
    <property type="match status" value="1"/>
</dbReference>
<dbReference type="Pfam" id="PF24497">
    <property type="entry name" value="MIT_ATG1"/>
    <property type="match status" value="1"/>
</dbReference>
<dbReference type="Pfam" id="PF00069">
    <property type="entry name" value="Pkinase"/>
    <property type="match status" value="1"/>
</dbReference>
<dbReference type="SMART" id="SM00220">
    <property type="entry name" value="S_TKc"/>
    <property type="match status" value="1"/>
</dbReference>
<dbReference type="SUPFAM" id="SSF56112">
    <property type="entry name" value="Protein kinase-like (PK-like)"/>
    <property type="match status" value="1"/>
</dbReference>
<dbReference type="PROSITE" id="PS00107">
    <property type="entry name" value="PROTEIN_KINASE_ATP"/>
    <property type="match status" value="1"/>
</dbReference>
<dbReference type="PROSITE" id="PS50011">
    <property type="entry name" value="PROTEIN_KINASE_DOM"/>
    <property type="match status" value="1"/>
</dbReference>
<dbReference type="PROSITE" id="PS00108">
    <property type="entry name" value="PROTEIN_KINASE_ST"/>
    <property type="match status" value="1"/>
</dbReference>
<gene>
    <name evidence="6" type="primary">ATG1A</name>
    <name evidence="8" type="ordered locus">At3g61960</name>
    <name evidence="9" type="ORF">F21F14.130</name>
</gene>
<sequence>MESARLVGDYALGPRIGSGSFAVVWLAKHRSSGLEVAVKEIDKKLLSPKVRDNLLKEISILSTIDHPNIIRFYEAIETGDRIFLVLEYCSGGDLAGYINRHGKVPEAVAKHFMRQLALGLQVLQEKHFIHRDLKPQNLLLSSKEVTPLLKIGDFGFARSLTPESMAETFCGSPLYMAPEIIRNQKYDAKADLWSAGAILFQLVTGKPPFDGNNHIQLFHNIVRDTELKFPEDTRNEIHPDCVDLCRSLLRRNPIERLTFREFFNHMFLREPRQIPDVEHSGFSTCTGKSLLPSAQPSTSTNRFKSSAENVHKHGSSSSASNSQISMPHTSFEKTRKDTEGQCSSNQSGVVDSLELIEREYVLVNRPSASLEGSSDCFDTSLQDSGFPNILPRNEKVSSSSLEAQKPLSDVSGPRPASVSYLLTEVQRLTIVHPPTKLQLLHQYAQALTELASEMGNTGQVKESFAVTLVVLAVWRKALEICDSWMMSVGENEVNPDPTTAPETSIPDLNSPAPAKTWVTQEFVTALNQAENLSTQLNETSAATHMPDAMETIYERALAYGKSGGAEEYLSNKESAATLYKKAILLLSFIIEEAVTLSLNPSFSLTPDDKKRILYYISNLQHRRSHL</sequence>
<evidence type="ECO:0000255" key="1">
    <source>
        <dbReference type="PROSITE-ProRule" id="PRU00159"/>
    </source>
</evidence>
<evidence type="ECO:0000256" key="2">
    <source>
        <dbReference type="SAM" id="MobiDB-lite"/>
    </source>
</evidence>
<evidence type="ECO:0000269" key="3">
    <source>
    </source>
</evidence>
<evidence type="ECO:0000269" key="4">
    <source>
    </source>
</evidence>
<evidence type="ECO:0000303" key="5">
    <source>
    </source>
</evidence>
<evidence type="ECO:0000303" key="6">
    <source>
    </source>
</evidence>
<evidence type="ECO:0000305" key="7"/>
<evidence type="ECO:0000312" key="8">
    <source>
        <dbReference type="Araport" id="AT3G61960"/>
    </source>
</evidence>
<evidence type="ECO:0000312" key="9">
    <source>
        <dbReference type="EMBL" id="CAB71903.1"/>
    </source>
</evidence>
<organism>
    <name type="scientific">Arabidopsis thaliana</name>
    <name type="common">Mouse-ear cress</name>
    <dbReference type="NCBI Taxonomy" id="3702"/>
    <lineage>
        <taxon>Eukaryota</taxon>
        <taxon>Viridiplantae</taxon>
        <taxon>Streptophyta</taxon>
        <taxon>Embryophyta</taxon>
        <taxon>Tracheophyta</taxon>
        <taxon>Spermatophyta</taxon>
        <taxon>Magnoliopsida</taxon>
        <taxon>eudicotyledons</taxon>
        <taxon>Gunneridae</taxon>
        <taxon>Pentapetalae</taxon>
        <taxon>rosids</taxon>
        <taxon>malvids</taxon>
        <taxon>Brassicales</taxon>
        <taxon>Brassicaceae</taxon>
        <taxon>Camelineae</taxon>
        <taxon>Arabidopsis</taxon>
    </lineage>
</organism>
<accession>Q94C95</accession>
<accession>Q9M269</accession>
<keyword id="KW-0025">Alternative splicing</keyword>
<keyword id="KW-0067">ATP-binding</keyword>
<keyword id="KW-0072">Autophagy</keyword>
<keyword id="KW-0968">Cytoplasmic vesicle</keyword>
<keyword id="KW-0418">Kinase</keyword>
<keyword id="KW-0547">Nucleotide-binding</keyword>
<keyword id="KW-0597">Phosphoprotein</keyword>
<keyword id="KW-0653">Protein transport</keyword>
<keyword id="KW-1185">Reference proteome</keyword>
<keyword id="KW-0723">Serine/threonine-protein kinase</keyword>
<keyword id="KW-0808">Transferase</keyword>
<keyword id="KW-0813">Transport</keyword>
<protein>
    <recommendedName>
        <fullName evidence="7">Serine/threonine-protein kinase ATG1a</fullName>
        <ecNumber>2.7.11.-</ecNumber>
    </recommendedName>
    <alternativeName>
        <fullName evidence="5">Autophagy-related protein 1a</fullName>
        <shortName evidence="5">AtAPG1a</shortName>
    </alternativeName>
</protein>